<sequence length="521" mass="54741">MLAKFAALAALVASANAQAVCSLTAETHPSLNWSKCTSSGCTNVAGSITVDANWRWTHITSGSTNCYSGNEWDTSLCSTNTDCATKCCVDGAEYSSTYGIQTSGNSLSLQFVTKGSYSTNIGSRTYLMNGADAYQGFELLGNEFTFDVDVSGTGCGLNGALYFVSMDLDGGKAKYTNNKAGAKYGTGYCDAQCPRDLKYINGIANVEGWTPSTNDANAGIGDHGTCCSEMDIWEANKVSTAFTPHPCTTIEQHMCEGDSCGGTYSDDRYGGTCDADGCDFNSYRMGNTTFYGEGKTVDTSSKFTVVTQFIKDSAGDLAEIKRFYVQNGKVIENSQSNVDGVSGNSITQSFCNAQKTAFGDIDDFNKKGGLKQMGKALAKPMVLVMSIWDDHAANMLWLDSTYPVEGGPGAYRGECPTTSGVPAEVEANAPNSKVIFSNIKFGPIGSTFSGGSSGTPPSNPSSSVKPVTSTAKPSSTSTASNPSGTGAAHWAQCGGIGFSGPTTCQSPYTCQKINDYYSQCV</sequence>
<proteinExistence type="inferred from homology"/>
<comment type="catalytic activity">
    <reaction>
        <text>Hydrolysis of (1-&gt;4)-beta-D-glucosidic linkages in cellulose and cellotetraose, releasing cellobiose from the non-reducing ends of the chains.</text>
        <dbReference type="EC" id="3.2.1.91"/>
    </reaction>
</comment>
<comment type="subcellular location">
    <subcellularLocation>
        <location>Secreted</location>
    </subcellularLocation>
</comment>
<comment type="similarity">
    <text evidence="5">Belongs to the glycosyl hydrolase 7 (cellulase C) family.</text>
</comment>
<evidence type="ECO:0000250" key="1"/>
<evidence type="ECO:0000255" key="2"/>
<evidence type="ECO:0000255" key="3">
    <source>
        <dbReference type="PROSITE-ProRule" id="PRU00597"/>
    </source>
</evidence>
<evidence type="ECO:0000256" key="4">
    <source>
        <dbReference type="SAM" id="MobiDB-lite"/>
    </source>
</evidence>
<evidence type="ECO:0000305" key="5"/>
<protein>
    <recommendedName>
        <fullName>Exoglucanase 1</fullName>
        <ecNumber>3.2.1.91</ecNumber>
    </recommendedName>
    <alternativeName>
        <fullName>1,4-beta-cellobiohydrolase 1</fullName>
    </alternativeName>
    <alternativeName>
        <fullName>Exocellobiohydrolase 1</fullName>
    </alternativeName>
</protein>
<reference key="1">
    <citation type="journal article" date="2003" name="Nature">
        <title>The genome sequence of the filamentous fungus Neurospora crassa.</title>
        <authorList>
            <person name="Galagan J.E."/>
            <person name="Calvo S.E."/>
            <person name="Borkovich K.A."/>
            <person name="Selker E.U."/>
            <person name="Read N.D."/>
            <person name="Jaffe D.B."/>
            <person name="FitzHugh W."/>
            <person name="Ma L.-J."/>
            <person name="Smirnov S."/>
            <person name="Purcell S."/>
            <person name="Rehman B."/>
            <person name="Elkins T."/>
            <person name="Engels R."/>
            <person name="Wang S."/>
            <person name="Nielsen C.B."/>
            <person name="Butler J."/>
            <person name="Endrizzi M."/>
            <person name="Qui D."/>
            <person name="Ianakiev P."/>
            <person name="Bell-Pedersen D."/>
            <person name="Nelson M.A."/>
            <person name="Werner-Washburne M."/>
            <person name="Selitrennikoff C.P."/>
            <person name="Kinsey J.A."/>
            <person name="Braun E.L."/>
            <person name="Zelter A."/>
            <person name="Schulte U."/>
            <person name="Kothe G.O."/>
            <person name="Jedd G."/>
            <person name="Mewes H.-W."/>
            <person name="Staben C."/>
            <person name="Marcotte E."/>
            <person name="Greenberg D."/>
            <person name="Roy A."/>
            <person name="Foley K."/>
            <person name="Naylor J."/>
            <person name="Stange-Thomann N."/>
            <person name="Barrett R."/>
            <person name="Gnerre S."/>
            <person name="Kamal M."/>
            <person name="Kamvysselis M."/>
            <person name="Mauceli E.W."/>
            <person name="Bielke C."/>
            <person name="Rudd S."/>
            <person name="Frishman D."/>
            <person name="Krystofova S."/>
            <person name="Rasmussen C."/>
            <person name="Metzenberg R.L."/>
            <person name="Perkins D.D."/>
            <person name="Kroken S."/>
            <person name="Cogoni C."/>
            <person name="Macino G."/>
            <person name="Catcheside D.E.A."/>
            <person name="Li W."/>
            <person name="Pratt R.J."/>
            <person name="Osmani S.A."/>
            <person name="DeSouza C.P.C."/>
            <person name="Glass N.L."/>
            <person name="Orbach M.J."/>
            <person name="Berglund J.A."/>
            <person name="Voelker R."/>
            <person name="Yarden O."/>
            <person name="Plamann M."/>
            <person name="Seiler S."/>
            <person name="Dunlap J.C."/>
            <person name="Radford A."/>
            <person name="Aramayo R."/>
            <person name="Natvig D.O."/>
            <person name="Alex L.A."/>
            <person name="Mannhaupt G."/>
            <person name="Ebbole D.J."/>
            <person name="Freitag M."/>
            <person name="Paulsen I."/>
            <person name="Sachs M.S."/>
            <person name="Lander E.S."/>
            <person name="Nusbaum C."/>
            <person name="Birren B.W."/>
        </authorList>
    </citation>
    <scope>NUCLEOTIDE SEQUENCE [LARGE SCALE GENOMIC DNA]</scope>
    <source>
        <strain>ATCC 24698 / 74-OR23-1A / CBS 708.71 / DSM 1257 / FGSC 987</strain>
    </source>
</reference>
<keyword id="KW-0119">Carbohydrate metabolism</keyword>
<keyword id="KW-0136">Cellulose degradation</keyword>
<keyword id="KW-1015">Disulfide bond</keyword>
<keyword id="KW-0325">Glycoprotein</keyword>
<keyword id="KW-0326">Glycosidase</keyword>
<keyword id="KW-0378">Hydrolase</keyword>
<keyword id="KW-0624">Polysaccharide degradation</keyword>
<keyword id="KW-1185">Reference proteome</keyword>
<keyword id="KW-0964">Secreted</keyword>
<keyword id="KW-0732">Signal</keyword>
<name>GUX1A_NEUCR</name>
<feature type="signal peptide" evidence="2">
    <location>
        <begin position="1"/>
        <end position="17"/>
    </location>
</feature>
<feature type="chain" id="PRO_0000270622" description="Exoglucanase 1">
    <location>
        <begin position="18"/>
        <end position="521"/>
    </location>
</feature>
<feature type="domain" description="CBM1" evidence="3">
    <location>
        <begin position="485"/>
        <end position="521"/>
    </location>
</feature>
<feature type="region of interest" description="Catalytic" evidence="1">
    <location>
        <begin position="18"/>
        <end position="450"/>
    </location>
</feature>
<feature type="region of interest" description="Disordered" evidence="4">
    <location>
        <begin position="447"/>
        <end position="486"/>
    </location>
</feature>
<feature type="region of interest" description="Linker" evidence="1">
    <location>
        <begin position="451"/>
        <end position="485"/>
    </location>
</feature>
<feature type="active site" description="Nucleophile" evidence="1">
    <location>
        <position position="229"/>
    </location>
</feature>
<feature type="active site" description="Proton donor" evidence="1">
    <location>
        <position position="234"/>
    </location>
</feature>
<feature type="glycosylation site" description="N-linked (GlcNAc...) asparagine" evidence="2">
    <location>
        <position position="32"/>
    </location>
</feature>
<feature type="glycosylation site" description="N-linked (GlcNAc...) asparagine" evidence="2">
    <location>
        <position position="287"/>
    </location>
</feature>
<feature type="disulfide bond" evidence="1">
    <location>
        <begin position="493"/>
        <end position="510"/>
    </location>
</feature>
<feature type="disulfide bond" evidence="1">
    <location>
        <begin position="504"/>
        <end position="520"/>
    </location>
</feature>
<accession>Q7SA23</accession>
<gene>
    <name type="primary">cbh-1</name>
    <name type="ORF">NCU07340</name>
</gene>
<dbReference type="EC" id="3.2.1.91"/>
<dbReference type="EMBL" id="CM002239">
    <property type="protein sequence ID" value="EAA33262.1"/>
    <property type="molecule type" value="Genomic_DNA"/>
</dbReference>
<dbReference type="RefSeq" id="XP_962498.1">
    <property type="nucleotide sequence ID" value="XM_957405.2"/>
</dbReference>
<dbReference type="SMR" id="Q7SA23"/>
<dbReference type="STRING" id="367110.Q7SA23"/>
<dbReference type="CAZy" id="CBM1">
    <property type="family name" value="Carbohydrate-Binding Module Family 1"/>
</dbReference>
<dbReference type="CAZy" id="GH7">
    <property type="family name" value="Glycoside Hydrolase Family 7"/>
</dbReference>
<dbReference type="GlyCosmos" id="Q7SA23">
    <property type="glycosylation" value="2 sites, No reported glycans"/>
</dbReference>
<dbReference type="PaxDb" id="5141-EFNCRP00000007117"/>
<dbReference type="EnsemblFungi" id="EAA33262">
    <property type="protein sequence ID" value="EAA33262"/>
    <property type="gene ID" value="NCU07340"/>
</dbReference>
<dbReference type="GeneID" id="3878646"/>
<dbReference type="KEGG" id="ncr:NCU07340"/>
<dbReference type="VEuPathDB" id="FungiDB:NCU07340"/>
<dbReference type="HOGENOM" id="CLU_020817_3_2_1"/>
<dbReference type="InParanoid" id="Q7SA23"/>
<dbReference type="OMA" id="CGFNGAL"/>
<dbReference type="OrthoDB" id="412382at2759"/>
<dbReference type="Proteomes" id="UP000001805">
    <property type="component" value="Chromosome 4, Linkage Group IV"/>
</dbReference>
<dbReference type="GO" id="GO:0005576">
    <property type="term" value="C:extracellular region"/>
    <property type="evidence" value="ECO:0007669"/>
    <property type="project" value="UniProtKB-SubCell"/>
</dbReference>
<dbReference type="GO" id="GO:0016162">
    <property type="term" value="F:cellulose 1,4-beta-cellobiosidase activity"/>
    <property type="evidence" value="ECO:0000318"/>
    <property type="project" value="GO_Central"/>
</dbReference>
<dbReference type="GO" id="GO:0030248">
    <property type="term" value="F:cellulose binding"/>
    <property type="evidence" value="ECO:0007669"/>
    <property type="project" value="InterPro"/>
</dbReference>
<dbReference type="GO" id="GO:0030245">
    <property type="term" value="P:cellulose catabolic process"/>
    <property type="evidence" value="ECO:0007669"/>
    <property type="project" value="UniProtKB-KW"/>
</dbReference>
<dbReference type="GO" id="GO:0009251">
    <property type="term" value="P:glucan catabolic process"/>
    <property type="evidence" value="ECO:0000318"/>
    <property type="project" value="GO_Central"/>
</dbReference>
<dbReference type="CDD" id="cd07999">
    <property type="entry name" value="GH7_CBH_EG"/>
    <property type="match status" value="1"/>
</dbReference>
<dbReference type="FunFam" id="2.70.100.10:FF:000001">
    <property type="entry name" value="Glucanase"/>
    <property type="match status" value="1"/>
</dbReference>
<dbReference type="Gene3D" id="2.70.100.10">
    <property type="entry name" value="Glycoside hydrolase, family 7, domain"/>
    <property type="match status" value="1"/>
</dbReference>
<dbReference type="InterPro" id="IPR035971">
    <property type="entry name" value="CBD_sf"/>
</dbReference>
<dbReference type="InterPro" id="IPR000254">
    <property type="entry name" value="Cellulose-bd_dom_fun"/>
</dbReference>
<dbReference type="InterPro" id="IPR013320">
    <property type="entry name" value="ConA-like_dom_sf"/>
</dbReference>
<dbReference type="InterPro" id="IPR001722">
    <property type="entry name" value="Glyco_hydro_7"/>
</dbReference>
<dbReference type="InterPro" id="IPR037019">
    <property type="entry name" value="Glyco_hydro_7_sf"/>
</dbReference>
<dbReference type="PANTHER" id="PTHR33753">
    <property type="entry name" value="1,4-BETA-D-GLUCAN CELLOBIOHYDROLASE B"/>
    <property type="match status" value="1"/>
</dbReference>
<dbReference type="PANTHER" id="PTHR33753:SF2">
    <property type="entry name" value="GLYCOSIDE HYDROLASE FAMILY 7 PROTEIN"/>
    <property type="match status" value="1"/>
</dbReference>
<dbReference type="Pfam" id="PF00734">
    <property type="entry name" value="CBM_1"/>
    <property type="match status" value="1"/>
</dbReference>
<dbReference type="Pfam" id="PF00840">
    <property type="entry name" value="Glyco_hydro_7"/>
    <property type="match status" value="1"/>
</dbReference>
<dbReference type="PRINTS" id="PR00734">
    <property type="entry name" value="GLHYDRLASE7"/>
</dbReference>
<dbReference type="SMART" id="SM00236">
    <property type="entry name" value="fCBD"/>
    <property type="match status" value="1"/>
</dbReference>
<dbReference type="SUPFAM" id="SSF57180">
    <property type="entry name" value="Cellulose-binding domain"/>
    <property type="match status" value="1"/>
</dbReference>
<dbReference type="SUPFAM" id="SSF49899">
    <property type="entry name" value="Concanavalin A-like lectins/glucanases"/>
    <property type="match status" value="1"/>
</dbReference>
<dbReference type="PROSITE" id="PS00562">
    <property type="entry name" value="CBM1_1"/>
    <property type="match status" value="1"/>
</dbReference>
<dbReference type="PROSITE" id="PS51164">
    <property type="entry name" value="CBM1_2"/>
    <property type="match status" value="1"/>
</dbReference>
<organism>
    <name type="scientific">Neurospora crassa (strain ATCC 24698 / 74-OR23-1A / CBS 708.71 / DSM 1257 / FGSC 987)</name>
    <dbReference type="NCBI Taxonomy" id="367110"/>
    <lineage>
        <taxon>Eukaryota</taxon>
        <taxon>Fungi</taxon>
        <taxon>Dikarya</taxon>
        <taxon>Ascomycota</taxon>
        <taxon>Pezizomycotina</taxon>
        <taxon>Sordariomycetes</taxon>
        <taxon>Sordariomycetidae</taxon>
        <taxon>Sordariales</taxon>
        <taxon>Sordariaceae</taxon>
        <taxon>Neurospora</taxon>
    </lineage>
</organism>